<evidence type="ECO:0000255" key="1">
    <source>
        <dbReference type="HAMAP-Rule" id="MF_01868"/>
    </source>
</evidence>
<name>AIS_ECO27</name>
<accession>B7UFR4</accession>
<sequence length="200" mass="22394">MLAFCRSSLKSKKYFIILLALAAIAGLGTHAAWSSNGLPRIDNKTLARLAQQHPVVVLFRHAERCDRSTNQCLSDKTGITVKGTQDARELGNAFSADIPDFDLYSSNTVRTIQSATWFSAGKKLTVDKRFLQCGNEIYSAIKDLQRKAPDKNIVIFTHNHCLTYIAKDKRDATFKPDYLDGLVMHVEKGKVYLDGEFVNH</sequence>
<dbReference type="EC" id="3.1.3.-" evidence="1"/>
<dbReference type="EMBL" id="FM180568">
    <property type="protein sequence ID" value="CAS09944.1"/>
    <property type="molecule type" value="Genomic_DNA"/>
</dbReference>
<dbReference type="RefSeq" id="WP_000879110.1">
    <property type="nucleotide sequence ID" value="NC_011601.1"/>
</dbReference>
<dbReference type="SMR" id="B7UFR4"/>
<dbReference type="KEGG" id="ecg:E2348C_2396"/>
<dbReference type="HOGENOM" id="CLU_106705_1_0_6"/>
<dbReference type="UniPathway" id="UPA00451"/>
<dbReference type="Proteomes" id="UP000008205">
    <property type="component" value="Chromosome"/>
</dbReference>
<dbReference type="GO" id="GO:0042597">
    <property type="term" value="C:periplasmic space"/>
    <property type="evidence" value="ECO:0007669"/>
    <property type="project" value="UniProtKB-SubCell"/>
</dbReference>
<dbReference type="GO" id="GO:0016791">
    <property type="term" value="F:phosphatase activity"/>
    <property type="evidence" value="ECO:0007669"/>
    <property type="project" value="UniProtKB-UniRule"/>
</dbReference>
<dbReference type="GO" id="GO:0008653">
    <property type="term" value="P:lipopolysaccharide metabolic process"/>
    <property type="evidence" value="ECO:0007669"/>
    <property type="project" value="UniProtKB-UniRule"/>
</dbReference>
<dbReference type="CDD" id="cd07040">
    <property type="entry name" value="HP"/>
    <property type="match status" value="1"/>
</dbReference>
<dbReference type="Gene3D" id="3.40.50.1240">
    <property type="entry name" value="Phosphoglycerate mutase-like"/>
    <property type="match status" value="1"/>
</dbReference>
<dbReference type="HAMAP" id="MF_01868">
    <property type="entry name" value="Ais"/>
    <property type="match status" value="1"/>
</dbReference>
<dbReference type="InterPro" id="IPR013078">
    <property type="entry name" value="His_Pase_superF_clade-1"/>
</dbReference>
<dbReference type="InterPro" id="IPR029033">
    <property type="entry name" value="His_PPase_superfam"/>
</dbReference>
<dbReference type="InterPro" id="IPR011310">
    <property type="entry name" value="LipoPS_heptP_Pase"/>
</dbReference>
<dbReference type="NCBIfam" id="NF011945">
    <property type="entry name" value="PRK15416.1"/>
    <property type="match status" value="1"/>
</dbReference>
<dbReference type="Pfam" id="PF00300">
    <property type="entry name" value="His_Phos_1"/>
    <property type="match status" value="1"/>
</dbReference>
<dbReference type="PIRSF" id="PIRSF011416">
    <property type="entry name" value="Ais-TraG-AfrS"/>
    <property type="match status" value="1"/>
</dbReference>
<dbReference type="SUPFAM" id="SSF53254">
    <property type="entry name" value="Phosphoglycerate mutase-like"/>
    <property type="match status" value="1"/>
</dbReference>
<comment type="function">
    <text evidence="1">Catalyzes the dephosphorylation of heptose(II) of the outer membrane lipopolysaccharide core.</text>
</comment>
<comment type="pathway">
    <text evidence="1">Bacterial outer membrane biogenesis; lipopolysaccharide metabolism.</text>
</comment>
<comment type="subcellular location">
    <subcellularLocation>
        <location evidence="1">Periplasm</location>
    </subcellularLocation>
</comment>
<comment type="similarity">
    <text evidence="1">Belongs to the phosphoglycerate mutase family. Ais subfamily.</text>
</comment>
<proteinExistence type="inferred from homology"/>
<reference key="1">
    <citation type="journal article" date="2009" name="J. Bacteriol.">
        <title>Complete genome sequence and comparative genome analysis of enteropathogenic Escherichia coli O127:H6 strain E2348/69.</title>
        <authorList>
            <person name="Iguchi A."/>
            <person name="Thomson N.R."/>
            <person name="Ogura Y."/>
            <person name="Saunders D."/>
            <person name="Ooka T."/>
            <person name="Henderson I.R."/>
            <person name="Harris D."/>
            <person name="Asadulghani M."/>
            <person name="Kurokawa K."/>
            <person name="Dean P."/>
            <person name="Kenny B."/>
            <person name="Quail M.A."/>
            <person name="Thurston S."/>
            <person name="Dougan G."/>
            <person name="Hayashi T."/>
            <person name="Parkhill J."/>
            <person name="Frankel G."/>
        </authorList>
    </citation>
    <scope>NUCLEOTIDE SEQUENCE [LARGE SCALE GENOMIC DNA]</scope>
    <source>
        <strain>E2348/69 / EPEC</strain>
    </source>
</reference>
<gene>
    <name evidence="1" type="primary">ais</name>
    <name type="ordered locus">E2348C_2396</name>
</gene>
<feature type="signal peptide" evidence="1">
    <location>
        <begin position="1"/>
        <end position="25"/>
    </location>
</feature>
<feature type="chain" id="PRO_0000380560" description="Lipopolysaccharide core heptose(II)-phosphate phosphatase">
    <location>
        <begin position="26"/>
        <end position="200"/>
    </location>
</feature>
<protein>
    <recommendedName>
        <fullName evidence="1">Lipopolysaccharide core heptose(II)-phosphate phosphatase</fullName>
        <ecNumber evidence="1">3.1.3.-</ecNumber>
    </recommendedName>
</protein>
<keyword id="KW-0378">Hydrolase</keyword>
<keyword id="KW-0574">Periplasm</keyword>
<keyword id="KW-1185">Reference proteome</keyword>
<keyword id="KW-0732">Signal</keyword>
<organism>
    <name type="scientific">Escherichia coli O127:H6 (strain E2348/69 / EPEC)</name>
    <dbReference type="NCBI Taxonomy" id="574521"/>
    <lineage>
        <taxon>Bacteria</taxon>
        <taxon>Pseudomonadati</taxon>
        <taxon>Pseudomonadota</taxon>
        <taxon>Gammaproteobacteria</taxon>
        <taxon>Enterobacterales</taxon>
        <taxon>Enterobacteriaceae</taxon>
        <taxon>Escherichia</taxon>
    </lineage>
</organism>